<accession>Q6FXR9</accession>
<name>GATB_CANGA</name>
<evidence type="ECO:0000255" key="1">
    <source>
        <dbReference type="HAMAP-Rule" id="MF_03147"/>
    </source>
</evidence>
<feature type="chain" id="PRO_0000413252" description="Glutamyl-tRNA(Gln) amidotransferase subunit B, mitochondrial">
    <location>
        <begin position="1"/>
        <end position="542"/>
    </location>
</feature>
<keyword id="KW-0067">ATP-binding</keyword>
<keyword id="KW-0436">Ligase</keyword>
<keyword id="KW-0496">Mitochondrion</keyword>
<keyword id="KW-0547">Nucleotide-binding</keyword>
<keyword id="KW-0648">Protein biosynthesis</keyword>
<keyword id="KW-1185">Reference proteome</keyword>
<comment type="function">
    <text evidence="1">Allows the formation of correctly charged Gln-tRNA(Gln) through the transamidation of misacylated Glu-tRNA(Gln) in the mitochondria. The reaction takes place in the presence of glutamine and ATP through an activated gamma-phospho-Glu-tRNA(Gln).</text>
</comment>
<comment type="catalytic activity">
    <reaction evidence="1">
        <text>L-glutamyl-tRNA(Gln) + L-glutamine + ATP + H2O = L-glutaminyl-tRNA(Gln) + L-glutamate + ADP + phosphate + H(+)</text>
        <dbReference type="Rhea" id="RHEA:17521"/>
        <dbReference type="Rhea" id="RHEA-COMP:9681"/>
        <dbReference type="Rhea" id="RHEA-COMP:9684"/>
        <dbReference type="ChEBI" id="CHEBI:15377"/>
        <dbReference type="ChEBI" id="CHEBI:15378"/>
        <dbReference type="ChEBI" id="CHEBI:29985"/>
        <dbReference type="ChEBI" id="CHEBI:30616"/>
        <dbReference type="ChEBI" id="CHEBI:43474"/>
        <dbReference type="ChEBI" id="CHEBI:58359"/>
        <dbReference type="ChEBI" id="CHEBI:78520"/>
        <dbReference type="ChEBI" id="CHEBI:78521"/>
        <dbReference type="ChEBI" id="CHEBI:456216"/>
    </reaction>
</comment>
<comment type="subunit">
    <text evidence="1">Subunit of the heterotrimeric GatFAB amidotransferase (AdT) complex, composed of A, B and F subunits.</text>
</comment>
<comment type="subcellular location">
    <subcellularLocation>
        <location evidence="1">Mitochondrion</location>
    </subcellularLocation>
</comment>
<comment type="miscellaneous">
    <text evidence="1">This protein may be expected to contain an N-terminal transit peptide but none has been predicted.</text>
</comment>
<comment type="similarity">
    <text evidence="1">Belongs to the GatB/GatE family. GatB subfamily.</text>
</comment>
<organism>
    <name type="scientific">Candida glabrata (strain ATCC 2001 / BCRC 20586 / JCM 3761 / NBRC 0622 / NRRL Y-65 / CBS 138)</name>
    <name type="common">Yeast</name>
    <name type="synonym">Nakaseomyces glabratus</name>
    <dbReference type="NCBI Taxonomy" id="284593"/>
    <lineage>
        <taxon>Eukaryota</taxon>
        <taxon>Fungi</taxon>
        <taxon>Dikarya</taxon>
        <taxon>Ascomycota</taxon>
        <taxon>Saccharomycotina</taxon>
        <taxon>Saccharomycetes</taxon>
        <taxon>Saccharomycetales</taxon>
        <taxon>Saccharomycetaceae</taxon>
        <taxon>Nakaseomyces</taxon>
    </lineage>
</organism>
<dbReference type="EC" id="6.3.5.-" evidence="1"/>
<dbReference type="EMBL" id="CR380947">
    <property type="protein sequence ID" value="CAG57863.1"/>
    <property type="molecule type" value="Genomic_DNA"/>
</dbReference>
<dbReference type="RefSeq" id="XP_444970.1">
    <property type="nucleotide sequence ID" value="XM_444970.1"/>
</dbReference>
<dbReference type="SMR" id="Q6FXR9"/>
<dbReference type="FunCoup" id="Q6FXR9">
    <property type="interactions" value="408"/>
</dbReference>
<dbReference type="STRING" id="284593.Q6FXR9"/>
<dbReference type="EnsemblFungi" id="CAGL0A04653g-T">
    <property type="protein sequence ID" value="CAGL0A04653g-T-p1"/>
    <property type="gene ID" value="CAGL0A04653g"/>
</dbReference>
<dbReference type="KEGG" id="cgr:2886409"/>
<dbReference type="CGD" id="CAL0126535">
    <property type="gene designation" value="CAGL0A04653g"/>
</dbReference>
<dbReference type="VEuPathDB" id="FungiDB:CAGL0A04653g"/>
<dbReference type="eggNOG" id="KOG2438">
    <property type="taxonomic scope" value="Eukaryota"/>
</dbReference>
<dbReference type="HOGENOM" id="CLU_019240_4_0_1"/>
<dbReference type="InParanoid" id="Q6FXR9"/>
<dbReference type="OMA" id="FELMFKE"/>
<dbReference type="Proteomes" id="UP000002428">
    <property type="component" value="Chromosome A"/>
</dbReference>
<dbReference type="GO" id="GO:0030956">
    <property type="term" value="C:glutamyl-tRNA(Gln) amidotransferase complex"/>
    <property type="evidence" value="ECO:0007669"/>
    <property type="project" value="UniProtKB-UniRule"/>
</dbReference>
<dbReference type="GO" id="GO:0005739">
    <property type="term" value="C:mitochondrion"/>
    <property type="evidence" value="ECO:0007669"/>
    <property type="project" value="UniProtKB-SubCell"/>
</dbReference>
<dbReference type="GO" id="GO:0005524">
    <property type="term" value="F:ATP binding"/>
    <property type="evidence" value="ECO:0007669"/>
    <property type="project" value="UniProtKB-KW"/>
</dbReference>
<dbReference type="GO" id="GO:0050567">
    <property type="term" value="F:glutaminyl-tRNA synthase (glutamine-hydrolyzing) activity"/>
    <property type="evidence" value="ECO:0007669"/>
    <property type="project" value="UniProtKB-UniRule"/>
</dbReference>
<dbReference type="GO" id="GO:0070681">
    <property type="term" value="P:glutaminyl-tRNAGln biosynthesis via transamidation"/>
    <property type="evidence" value="ECO:0007669"/>
    <property type="project" value="UniProtKB-UniRule"/>
</dbReference>
<dbReference type="GO" id="GO:0032543">
    <property type="term" value="P:mitochondrial translation"/>
    <property type="evidence" value="ECO:0007669"/>
    <property type="project" value="UniProtKB-UniRule"/>
</dbReference>
<dbReference type="Gene3D" id="1.10.10.410">
    <property type="match status" value="1"/>
</dbReference>
<dbReference type="HAMAP" id="MF_00121">
    <property type="entry name" value="GatB"/>
    <property type="match status" value="1"/>
</dbReference>
<dbReference type="InterPro" id="IPR017959">
    <property type="entry name" value="Asn/Gln-tRNA_amidoTrfase_suB/E"/>
</dbReference>
<dbReference type="InterPro" id="IPR006075">
    <property type="entry name" value="Asn/Gln-tRNA_Trfase_suB/E_cat"/>
</dbReference>
<dbReference type="InterPro" id="IPR018027">
    <property type="entry name" value="Asn/Gln_amidotransferase"/>
</dbReference>
<dbReference type="InterPro" id="IPR003789">
    <property type="entry name" value="Asn/Gln_tRNA_amidoTrase-B-like"/>
</dbReference>
<dbReference type="InterPro" id="IPR004413">
    <property type="entry name" value="GatB"/>
</dbReference>
<dbReference type="InterPro" id="IPR023168">
    <property type="entry name" value="GatB_Yqey_C_2"/>
</dbReference>
<dbReference type="InterPro" id="IPR017958">
    <property type="entry name" value="Gln-tRNA_amidoTrfase_suB_CS"/>
</dbReference>
<dbReference type="InterPro" id="IPR014746">
    <property type="entry name" value="Gln_synth/guanido_kin_cat_dom"/>
</dbReference>
<dbReference type="NCBIfam" id="TIGR00133">
    <property type="entry name" value="gatB"/>
    <property type="match status" value="1"/>
</dbReference>
<dbReference type="NCBIfam" id="NF004012">
    <property type="entry name" value="PRK05477.1-2"/>
    <property type="match status" value="1"/>
</dbReference>
<dbReference type="PANTHER" id="PTHR11659">
    <property type="entry name" value="GLUTAMYL-TRNA GLN AMIDOTRANSFERASE SUBUNIT B MITOCHONDRIAL AND PROKARYOTIC PET112-RELATED"/>
    <property type="match status" value="1"/>
</dbReference>
<dbReference type="PANTHER" id="PTHR11659:SF0">
    <property type="entry name" value="GLUTAMYL-TRNA(GLN) AMIDOTRANSFERASE SUBUNIT B, MITOCHONDRIAL"/>
    <property type="match status" value="1"/>
</dbReference>
<dbReference type="Pfam" id="PF02934">
    <property type="entry name" value="GatB_N"/>
    <property type="match status" value="1"/>
</dbReference>
<dbReference type="Pfam" id="PF02637">
    <property type="entry name" value="GatB_Yqey"/>
    <property type="match status" value="1"/>
</dbReference>
<dbReference type="SMART" id="SM00845">
    <property type="entry name" value="GatB_Yqey"/>
    <property type="match status" value="1"/>
</dbReference>
<dbReference type="SUPFAM" id="SSF89095">
    <property type="entry name" value="GatB/YqeY motif"/>
    <property type="match status" value="1"/>
</dbReference>
<dbReference type="SUPFAM" id="SSF55931">
    <property type="entry name" value="Glutamine synthetase/guanido kinase"/>
    <property type="match status" value="1"/>
</dbReference>
<dbReference type="PROSITE" id="PS01234">
    <property type="entry name" value="GATB"/>
    <property type="match status" value="1"/>
</dbReference>
<gene>
    <name evidence="1" type="primary">PET112</name>
    <name type="ordered locus">CAGL0A04653g</name>
</gene>
<protein>
    <recommendedName>
        <fullName evidence="1">Glutamyl-tRNA(Gln) amidotransferase subunit B, mitochondrial</fullName>
        <shortName evidence="1">Glu-AdT subunit B</shortName>
        <ecNumber evidence="1">6.3.5.-</ecNumber>
    </recommendedName>
</protein>
<proteinExistence type="inferred from homology"/>
<reference key="1">
    <citation type="journal article" date="2004" name="Nature">
        <title>Genome evolution in yeasts.</title>
        <authorList>
            <person name="Dujon B."/>
            <person name="Sherman D."/>
            <person name="Fischer G."/>
            <person name="Durrens P."/>
            <person name="Casaregola S."/>
            <person name="Lafontaine I."/>
            <person name="de Montigny J."/>
            <person name="Marck C."/>
            <person name="Neuveglise C."/>
            <person name="Talla E."/>
            <person name="Goffard N."/>
            <person name="Frangeul L."/>
            <person name="Aigle M."/>
            <person name="Anthouard V."/>
            <person name="Babour A."/>
            <person name="Barbe V."/>
            <person name="Barnay S."/>
            <person name="Blanchin S."/>
            <person name="Beckerich J.-M."/>
            <person name="Beyne E."/>
            <person name="Bleykasten C."/>
            <person name="Boisrame A."/>
            <person name="Boyer J."/>
            <person name="Cattolico L."/>
            <person name="Confanioleri F."/>
            <person name="de Daruvar A."/>
            <person name="Despons L."/>
            <person name="Fabre E."/>
            <person name="Fairhead C."/>
            <person name="Ferry-Dumazet H."/>
            <person name="Groppi A."/>
            <person name="Hantraye F."/>
            <person name="Hennequin C."/>
            <person name="Jauniaux N."/>
            <person name="Joyet P."/>
            <person name="Kachouri R."/>
            <person name="Kerrest A."/>
            <person name="Koszul R."/>
            <person name="Lemaire M."/>
            <person name="Lesur I."/>
            <person name="Ma L."/>
            <person name="Muller H."/>
            <person name="Nicaud J.-M."/>
            <person name="Nikolski M."/>
            <person name="Oztas S."/>
            <person name="Ozier-Kalogeropoulos O."/>
            <person name="Pellenz S."/>
            <person name="Potier S."/>
            <person name="Richard G.-F."/>
            <person name="Straub M.-L."/>
            <person name="Suleau A."/>
            <person name="Swennen D."/>
            <person name="Tekaia F."/>
            <person name="Wesolowski-Louvel M."/>
            <person name="Westhof E."/>
            <person name="Wirth B."/>
            <person name="Zeniou-Meyer M."/>
            <person name="Zivanovic Y."/>
            <person name="Bolotin-Fukuhara M."/>
            <person name="Thierry A."/>
            <person name="Bouchier C."/>
            <person name="Caudron B."/>
            <person name="Scarpelli C."/>
            <person name="Gaillardin C."/>
            <person name="Weissenbach J."/>
            <person name="Wincker P."/>
            <person name="Souciet J.-L."/>
        </authorList>
    </citation>
    <scope>NUCLEOTIDE SEQUENCE [LARGE SCALE GENOMIC DNA]</scope>
    <source>
        <strain>ATCC 2001 / BCRC 20586 / JCM 3761 / NBRC 0622 / NRRL Y-65 / CBS 138</strain>
    </source>
</reference>
<sequence>MYKNSIRTRPLKRFISNHAKGKFALDPAYKLKCGLEIHTQLNTRYKLFSYTSNEAENLTISPNTSTSHYDISLPGTQPRLNYEAVLYATKLALSLDSDINLISQFDRKHYFYGDQPQGYQVTQHYKPFAKNGKLTLYGAYEDINENEKTIRIEQLQIEQDTGKSLYASGADMTTMIDLNRSNVPLIELVTKPDFEDLKQVRAFIKKYQDLVRRLNICTGNLETGSMRIDVNLSVNDFARVELKNLPNTSSIMNAIKFEYERQLHIIKNGEGERLLRDTETRGWTGSETVKLRSKETSIDYRYMPDPEIPFITIADDVVHKVKSTLPVSADALLREFMNKPYNLPIKHAKILCISGNQNEMYDHEQLRKYYKDVCVHYQKEYPDDNLKIPSNWILNEFIGNLNKLETKLNEIYEILTPSTFFELIRLMKQGVITGNSSKLLLFHIVNNVKTGVFTKSSQINLKQLINEYELQAADQINEHELEEICRSIIDDIKDEKLLQNLISGKKKTSLKFLVGQGMRLSQGRLNPNELEKMFRQVLDIKW</sequence>